<sequence>MNAVTEGRKVLLEIADLKVHFEIKDGKQWFWQPPKTLKAVDGVTLRLYEGETLGVVGESGCGKSTFARAIIGLVKATDGHVAWLGKELLGMKPDEWRAVRSDIQMIFQDPLASLNPRMTIGEIIAEPLRTYHPKMSRQEVRERVKAMMLKVGLLPNLINRYPHEFSGGQCQRIGIARALILEPKLIICDEPVSALDVSIQAQVVNLLQQLQREMGLSLIFIAHDLAVVKHISDRVLVMYLGHAVELGTYDEVYHNPLHPYTRALMSAVPIPDPDLEKNKTIQLLEGELPSPINPPSGCVFRTRCPIAGPECAKTRPVLEGSFRHSVSCLKVDPL</sequence>
<comment type="function">
    <text evidence="3 4">Part of the ABC transporter complex OppABCDF involved in the uptake of oligopeptides and of the ABC transporter complex MppA-OppBCDF involved in the uptake of the cell wall murein tripeptide L-alanyl-gamma-D-glutamyl-meso-diaminopimelate (PubMed:9495761). Probably responsible for energy coupling to the transport system (Probable). Plays an important nutritional role and is involved in the recycling of cell wall peptides (PubMed:9495761).</text>
</comment>
<comment type="catalytic activity">
    <reaction evidence="5">
        <text>a [peptide](out) + ATP + H2O = a [peptide](in) + ADP + phosphate + H(+)</text>
        <dbReference type="Rhea" id="RHEA:78459"/>
        <dbReference type="Rhea" id="RHEA-COMP:19083"/>
        <dbReference type="ChEBI" id="CHEBI:15377"/>
        <dbReference type="ChEBI" id="CHEBI:15378"/>
        <dbReference type="ChEBI" id="CHEBI:30616"/>
        <dbReference type="ChEBI" id="CHEBI:33710"/>
        <dbReference type="ChEBI" id="CHEBI:43474"/>
        <dbReference type="ChEBI" id="CHEBI:456216"/>
        <dbReference type="EC" id="7.4.2.6"/>
    </reaction>
    <physiologicalReaction direction="left-to-right" evidence="5">
        <dbReference type="Rhea" id="RHEA:78460"/>
    </physiologicalReaction>
</comment>
<comment type="catalytic activity">
    <reaction evidence="5">
        <text>L-alanyl-gamma-D-glutamyl-meso-2,6-diaminopimelate(out) + ATP + H2O = L-alanyl-gamma-D-glutamyl-meso-2,6-diaminopimelate(in) + ADP + phosphate + H(+)</text>
        <dbReference type="Rhea" id="RHEA:29763"/>
        <dbReference type="ChEBI" id="CHEBI:15377"/>
        <dbReference type="ChEBI" id="CHEBI:15378"/>
        <dbReference type="ChEBI" id="CHEBI:30616"/>
        <dbReference type="ChEBI" id="CHEBI:43474"/>
        <dbReference type="ChEBI" id="CHEBI:61401"/>
        <dbReference type="ChEBI" id="CHEBI:456216"/>
    </reaction>
    <physiologicalReaction direction="left-to-right" evidence="5">
        <dbReference type="Rhea" id="RHEA:29764"/>
    </physiologicalReaction>
</comment>
<comment type="subunit">
    <text evidence="5">The complex is composed of two ATP-binding proteins (OppD and OppF), two transmembrane proteins (OppB and OppC) and a solute-binding protein (OppA or MppA).</text>
</comment>
<comment type="subcellular location">
    <subcellularLocation>
        <location evidence="1">Cell inner membrane</location>
        <topology evidence="1">Peripheral membrane protein</topology>
    </subcellularLocation>
</comment>
<comment type="similarity">
    <text evidence="4">Belongs to the ABC transporter superfamily.</text>
</comment>
<name>OPPF_ECOLI</name>
<proteinExistence type="evidence at protein level"/>
<dbReference type="EC" id="7.4.2.6" evidence="5"/>
<dbReference type="EMBL" id="U00096">
    <property type="protein sequence ID" value="AAC74329.1"/>
    <property type="molecule type" value="Genomic_DNA"/>
</dbReference>
<dbReference type="EMBL" id="AP009048">
    <property type="protein sequence ID" value="BAA14779.1"/>
    <property type="molecule type" value="Genomic_DNA"/>
</dbReference>
<dbReference type="PIR" id="B64872">
    <property type="entry name" value="B64872"/>
</dbReference>
<dbReference type="RefSeq" id="NP_415763.1">
    <property type="nucleotide sequence ID" value="NC_000913.3"/>
</dbReference>
<dbReference type="RefSeq" id="WP_000994906.1">
    <property type="nucleotide sequence ID" value="NZ_CP064677.1"/>
</dbReference>
<dbReference type="SMR" id="P77737"/>
<dbReference type="BioGRID" id="4260114">
    <property type="interactions" value="424"/>
</dbReference>
<dbReference type="BioGRID" id="850185">
    <property type="interactions" value="2"/>
</dbReference>
<dbReference type="ComplexPortal" id="CPX-4343">
    <property type="entry name" value="Murein tripeptide ABC transporter complex"/>
</dbReference>
<dbReference type="ComplexPortal" id="CPX-4344">
    <property type="entry name" value="Oligopeptide ABC transporter complex"/>
</dbReference>
<dbReference type="DIP" id="DIP-10409N"/>
<dbReference type="FunCoup" id="P77737">
    <property type="interactions" value="486"/>
</dbReference>
<dbReference type="IntAct" id="P77737">
    <property type="interactions" value="7"/>
</dbReference>
<dbReference type="STRING" id="511145.b1247"/>
<dbReference type="TCDB" id="3.A.1.5.41">
    <property type="family name" value="the atp-binding cassette (abc) superfamily"/>
</dbReference>
<dbReference type="jPOST" id="P77737"/>
<dbReference type="PaxDb" id="511145-b1247"/>
<dbReference type="EnsemblBacteria" id="AAC74329">
    <property type="protein sequence ID" value="AAC74329"/>
    <property type="gene ID" value="b1247"/>
</dbReference>
<dbReference type="GeneID" id="945818"/>
<dbReference type="KEGG" id="ecj:JW1239"/>
<dbReference type="KEGG" id="eco:b1247"/>
<dbReference type="PATRIC" id="fig|511145.12.peg.1297"/>
<dbReference type="EchoBASE" id="EB0672"/>
<dbReference type="eggNOG" id="COG4608">
    <property type="taxonomic scope" value="Bacteria"/>
</dbReference>
<dbReference type="HOGENOM" id="CLU_000604_1_23_6"/>
<dbReference type="InParanoid" id="P77737"/>
<dbReference type="PhylomeDB" id="P77737"/>
<dbReference type="BioCyc" id="EcoCyc:OPPF-MONOMER"/>
<dbReference type="BioCyc" id="MetaCyc:OPPF-MONOMER"/>
<dbReference type="PRO" id="PR:P77737"/>
<dbReference type="Proteomes" id="UP000000625">
    <property type="component" value="Chromosome"/>
</dbReference>
<dbReference type="GO" id="GO:0055052">
    <property type="term" value="C:ATP-binding cassette (ABC) transporter complex, substrate-binding subunit-containing"/>
    <property type="evidence" value="ECO:0000303"/>
    <property type="project" value="ComplexPortal"/>
</dbReference>
<dbReference type="GO" id="GO:0016020">
    <property type="term" value="C:membrane"/>
    <property type="evidence" value="ECO:0000303"/>
    <property type="project" value="ComplexPortal"/>
</dbReference>
<dbReference type="GO" id="GO:0005886">
    <property type="term" value="C:plasma membrane"/>
    <property type="evidence" value="ECO:0000314"/>
    <property type="project" value="EcoCyc"/>
</dbReference>
<dbReference type="GO" id="GO:0005524">
    <property type="term" value="F:ATP binding"/>
    <property type="evidence" value="ECO:0000255"/>
    <property type="project" value="EcoCyc"/>
</dbReference>
<dbReference type="GO" id="GO:0016887">
    <property type="term" value="F:ATP hydrolysis activity"/>
    <property type="evidence" value="ECO:0007669"/>
    <property type="project" value="InterPro"/>
</dbReference>
<dbReference type="GO" id="GO:0015640">
    <property type="term" value="F:peptidoglycan peptide transmembrane transporter activity"/>
    <property type="evidence" value="ECO:0000269"/>
    <property type="project" value="EcoCyc"/>
</dbReference>
<dbReference type="GO" id="GO:0140205">
    <property type="term" value="P:oligopeptide import across plasma membrane"/>
    <property type="evidence" value="ECO:0000303"/>
    <property type="project" value="ComplexPortal"/>
</dbReference>
<dbReference type="GO" id="GO:0015834">
    <property type="term" value="P:peptidoglycan-associated peptide transport"/>
    <property type="evidence" value="ECO:0000269"/>
    <property type="project" value="EcoCyc"/>
</dbReference>
<dbReference type="GO" id="GO:0015031">
    <property type="term" value="P:protein transport"/>
    <property type="evidence" value="ECO:0007669"/>
    <property type="project" value="UniProtKB-KW"/>
</dbReference>
<dbReference type="GO" id="GO:0140207">
    <property type="term" value="P:tripeptide import across plasma membrane"/>
    <property type="evidence" value="ECO:0000303"/>
    <property type="project" value="ComplexPortal"/>
</dbReference>
<dbReference type="CDD" id="cd03257">
    <property type="entry name" value="ABC_NikE_OppD_transporters"/>
    <property type="match status" value="1"/>
</dbReference>
<dbReference type="FunFam" id="3.40.50.300:FF:000016">
    <property type="entry name" value="Oligopeptide ABC transporter ATP-binding component"/>
    <property type="match status" value="1"/>
</dbReference>
<dbReference type="Gene3D" id="3.40.50.300">
    <property type="entry name" value="P-loop containing nucleotide triphosphate hydrolases"/>
    <property type="match status" value="1"/>
</dbReference>
<dbReference type="InterPro" id="IPR003593">
    <property type="entry name" value="AAA+_ATPase"/>
</dbReference>
<dbReference type="InterPro" id="IPR050319">
    <property type="entry name" value="ABC_transp_ATP-bind"/>
</dbReference>
<dbReference type="InterPro" id="IPR003439">
    <property type="entry name" value="ABC_transporter-like_ATP-bd"/>
</dbReference>
<dbReference type="InterPro" id="IPR017871">
    <property type="entry name" value="ABC_transporter-like_CS"/>
</dbReference>
<dbReference type="InterPro" id="IPR013563">
    <property type="entry name" value="Oligopep_ABC_C"/>
</dbReference>
<dbReference type="InterPro" id="IPR027417">
    <property type="entry name" value="P-loop_NTPase"/>
</dbReference>
<dbReference type="NCBIfam" id="TIGR01727">
    <property type="entry name" value="oligo_HPY"/>
    <property type="match status" value="1"/>
</dbReference>
<dbReference type="NCBIfam" id="NF011659">
    <property type="entry name" value="PRK15079.1"/>
    <property type="match status" value="1"/>
</dbReference>
<dbReference type="PANTHER" id="PTHR43776:SF7">
    <property type="entry name" value="D,D-DIPEPTIDE TRANSPORT ATP-BINDING PROTEIN DDPF-RELATED"/>
    <property type="match status" value="1"/>
</dbReference>
<dbReference type="PANTHER" id="PTHR43776">
    <property type="entry name" value="TRANSPORT ATP-BINDING PROTEIN"/>
    <property type="match status" value="1"/>
</dbReference>
<dbReference type="Pfam" id="PF00005">
    <property type="entry name" value="ABC_tran"/>
    <property type="match status" value="1"/>
</dbReference>
<dbReference type="Pfam" id="PF08352">
    <property type="entry name" value="oligo_HPY"/>
    <property type="match status" value="1"/>
</dbReference>
<dbReference type="SMART" id="SM00382">
    <property type="entry name" value="AAA"/>
    <property type="match status" value="1"/>
</dbReference>
<dbReference type="SUPFAM" id="SSF52540">
    <property type="entry name" value="P-loop containing nucleoside triphosphate hydrolases"/>
    <property type="match status" value="1"/>
</dbReference>
<dbReference type="PROSITE" id="PS00211">
    <property type="entry name" value="ABC_TRANSPORTER_1"/>
    <property type="match status" value="1"/>
</dbReference>
<dbReference type="PROSITE" id="PS50893">
    <property type="entry name" value="ABC_TRANSPORTER_2"/>
    <property type="match status" value="1"/>
</dbReference>
<organism>
    <name type="scientific">Escherichia coli (strain K12)</name>
    <dbReference type="NCBI Taxonomy" id="83333"/>
    <lineage>
        <taxon>Bacteria</taxon>
        <taxon>Pseudomonadati</taxon>
        <taxon>Pseudomonadota</taxon>
        <taxon>Gammaproteobacteria</taxon>
        <taxon>Enterobacterales</taxon>
        <taxon>Enterobacteriaceae</taxon>
        <taxon>Escherichia</taxon>
    </lineage>
</organism>
<gene>
    <name type="primary">oppF</name>
    <name type="ordered locus">b1247</name>
    <name type="ordered locus">JW1239</name>
</gene>
<feature type="chain" id="PRO_0000092671" description="Oligopeptide transport ATP-binding protein OppF">
    <location>
        <begin position="1"/>
        <end position="334"/>
    </location>
</feature>
<feature type="domain" description="ABC transporter" evidence="2">
    <location>
        <begin position="12"/>
        <end position="265"/>
    </location>
</feature>
<feature type="binding site" evidence="2">
    <location>
        <begin position="57"/>
        <end position="64"/>
    </location>
    <ligand>
        <name>ATP</name>
        <dbReference type="ChEBI" id="CHEBI:30616"/>
    </ligand>
</feature>
<reference key="1">
    <citation type="journal article" date="1996" name="DNA Res.">
        <title>A 570-kb DNA sequence of the Escherichia coli K-12 genome corresponding to the 28.0-40.1 min region on the linkage map.</title>
        <authorList>
            <person name="Aiba H."/>
            <person name="Baba T."/>
            <person name="Fujita K."/>
            <person name="Hayashi K."/>
            <person name="Inada T."/>
            <person name="Isono K."/>
            <person name="Itoh T."/>
            <person name="Kasai H."/>
            <person name="Kashimoto K."/>
            <person name="Kimura S."/>
            <person name="Kitakawa M."/>
            <person name="Kitagawa M."/>
            <person name="Makino K."/>
            <person name="Miki T."/>
            <person name="Mizobuchi K."/>
            <person name="Mori H."/>
            <person name="Mori T."/>
            <person name="Motomura K."/>
            <person name="Nakade S."/>
            <person name="Nakamura Y."/>
            <person name="Nashimoto H."/>
            <person name="Nishio Y."/>
            <person name="Oshima T."/>
            <person name="Saito N."/>
            <person name="Sampei G."/>
            <person name="Seki Y."/>
            <person name="Sivasundaram S."/>
            <person name="Tagami H."/>
            <person name="Takeda J."/>
            <person name="Takemoto K."/>
            <person name="Takeuchi Y."/>
            <person name="Wada C."/>
            <person name="Yamamoto Y."/>
            <person name="Horiuchi T."/>
        </authorList>
    </citation>
    <scope>NUCLEOTIDE SEQUENCE [LARGE SCALE GENOMIC DNA]</scope>
    <source>
        <strain>K12 / W3110 / ATCC 27325 / DSM 5911</strain>
    </source>
</reference>
<reference key="2">
    <citation type="journal article" date="1997" name="Science">
        <title>The complete genome sequence of Escherichia coli K-12.</title>
        <authorList>
            <person name="Blattner F.R."/>
            <person name="Plunkett G. III"/>
            <person name="Bloch C.A."/>
            <person name="Perna N.T."/>
            <person name="Burland V."/>
            <person name="Riley M."/>
            <person name="Collado-Vides J."/>
            <person name="Glasner J.D."/>
            <person name="Rode C.K."/>
            <person name="Mayhew G.F."/>
            <person name="Gregor J."/>
            <person name="Davis N.W."/>
            <person name="Kirkpatrick H.A."/>
            <person name="Goeden M.A."/>
            <person name="Rose D.J."/>
            <person name="Mau B."/>
            <person name="Shao Y."/>
        </authorList>
    </citation>
    <scope>NUCLEOTIDE SEQUENCE [LARGE SCALE GENOMIC DNA]</scope>
    <source>
        <strain>K12 / MG1655 / ATCC 47076</strain>
    </source>
</reference>
<reference key="3">
    <citation type="journal article" date="2006" name="Mol. Syst. Biol.">
        <title>Highly accurate genome sequences of Escherichia coli K-12 strains MG1655 and W3110.</title>
        <authorList>
            <person name="Hayashi K."/>
            <person name="Morooka N."/>
            <person name="Yamamoto Y."/>
            <person name="Fujita K."/>
            <person name="Isono K."/>
            <person name="Choi S."/>
            <person name="Ohtsubo E."/>
            <person name="Baba T."/>
            <person name="Wanner B.L."/>
            <person name="Mori H."/>
            <person name="Horiuchi T."/>
        </authorList>
    </citation>
    <scope>NUCLEOTIDE SEQUENCE [LARGE SCALE GENOMIC DNA]</scope>
    <source>
        <strain>K12 / W3110 / ATCC 27325 / DSM 5911</strain>
    </source>
</reference>
<reference key="4">
    <citation type="journal article" date="1998" name="J. Bacteriol.">
        <title>MppA, a periplasmic binding protein essential for import of the bacterial cell wall peptide L-alanyl-gamma-D-glutamyl-meso-diaminopimelate.</title>
        <authorList>
            <person name="Park J.T."/>
            <person name="Raychaudhuri D."/>
            <person name="Li H."/>
            <person name="Normark S."/>
            <person name="Mengin-Lecreulx D."/>
        </authorList>
    </citation>
    <scope>FUNCTION</scope>
    <scope>SUBUNIT</scope>
    <source>
        <strain>K12 / AT980</strain>
    </source>
</reference>
<keyword id="KW-0067">ATP-binding</keyword>
<keyword id="KW-0997">Cell inner membrane</keyword>
<keyword id="KW-1003">Cell membrane</keyword>
<keyword id="KW-0472">Membrane</keyword>
<keyword id="KW-0547">Nucleotide-binding</keyword>
<keyword id="KW-0571">Peptide transport</keyword>
<keyword id="KW-0653">Protein transport</keyword>
<keyword id="KW-1185">Reference proteome</keyword>
<keyword id="KW-1278">Translocase</keyword>
<keyword id="KW-0813">Transport</keyword>
<evidence type="ECO:0000250" key="1">
    <source>
        <dbReference type="UniProtKB" id="P08007"/>
    </source>
</evidence>
<evidence type="ECO:0000255" key="2">
    <source>
        <dbReference type="PROSITE-ProRule" id="PRU00434"/>
    </source>
</evidence>
<evidence type="ECO:0000269" key="3">
    <source>
    </source>
</evidence>
<evidence type="ECO:0000305" key="4"/>
<evidence type="ECO:0000305" key="5">
    <source>
    </source>
</evidence>
<accession>P77737</accession>
<accession>P76920</accession>
<protein>
    <recommendedName>
        <fullName evidence="4">Oligopeptide transport ATP-binding protein OppF</fullName>
        <ecNumber evidence="5">7.4.2.6</ecNumber>
    </recommendedName>
</protein>